<proteinExistence type="inferred from homology"/>
<name>XLNR_ASPCL</name>
<evidence type="ECO:0000250" key="1"/>
<evidence type="ECO:0000255" key="2">
    <source>
        <dbReference type="PROSITE-ProRule" id="PRU00227"/>
    </source>
</evidence>
<evidence type="ECO:0000256" key="3">
    <source>
        <dbReference type="SAM" id="MobiDB-lite"/>
    </source>
</evidence>
<evidence type="ECO:0000305" key="4"/>
<keyword id="KW-0010">Activator</keyword>
<keyword id="KW-0238">DNA-binding</keyword>
<keyword id="KW-0479">Metal-binding</keyword>
<keyword id="KW-0539">Nucleus</keyword>
<keyword id="KW-1185">Reference proteome</keyword>
<keyword id="KW-0804">Transcription</keyword>
<keyword id="KW-0805">Transcription regulation</keyword>
<keyword id="KW-0862">Zinc</keyword>
<gene>
    <name type="primary">xlnR</name>
    <name type="ORF">ACLA_074570</name>
</gene>
<sequence>MSTTSVQHFAPSYPPFSSGLSSNRMAQSQTPGLDTLAEGSQYALEQLQLSREAAAGDTTATAASGPSDPMSKSKDPYDFDHHNHNHHNHHNNNHHPNSNSNNSLPGFKNPAQRDPLAEARSAIRKNSSSAPVRRRISRACDQCNQLRTRCDGQNPCAHCIEFGLTCEYARERKKRGKASKKDLAAAAAAATATPGQPNENPGKDSGTMVGGHSPPDRRQELNGRYDPAFDAARNLSGSAQPQLPHAEGPGMVGMPNTQHLPSPSQPPMGGGLEGLPMNGYNGLNDSNRPPIPVSELQSLHMLHSSNPHPRSPPSILPSQRYNGGYNENAYSLMNPQEHNPTPMNQFRLGNSTENPPNTFLGLSPPAQSPGWLPLPSPSPANFPSFSMASFSTTLRYPVLHPVLPHIASIIPQSLACDLLDVYFTSSSSSHLSPQSPYVVGYIFRKQSFLHPTKPRACSPGLLASMLWVAAQTSDAPFLTSPPSARGRVCQKLLELTVGLLRPLIHGPAPGETSPNYAANMVINGIALGGFGVSMDQLGAQSSATGAVDDVATYVHLATVISASEYKAASMRWWTAAWSLARELKLGRELPPNTSQTRQDGERENDPDADPSNRHSPSLITAMGHGPGNTVINVTEDEREERRRLWWLLYATDRHLALCYNRPLTLLDKECNGLLQPMNDDLWQASDFASASYRQAGPPLECSGHSMFGYFLPLMTILGEIIDLQQARNHPRFGLAFRGSPECDAQVLEIARQLDLYAQTLKEFETRYTSGLALGAADNDTAMEGSHLNHVSPSGRSSSTVDSRVNESIVHTKMVVAYGTHIMHVLHILLAGKWDPINLLDDNDLWISSESFIAAMGHAVGAAEAAADILEYDPDLSFMPFFFGIYLLQGSFLLLLTADKLQGDASPSVVRACETIVRAHEACVVTLNTEYQRTFRKVMRSALAQVRGRLPEDFGEQQQRRREVLALYRWTGDGSGLAL</sequence>
<feature type="chain" id="PRO_0000393148" description="Xylanolytic transcriptional activator xlnR">
    <location>
        <begin position="1"/>
        <end position="978"/>
    </location>
</feature>
<feature type="DNA-binding region" description="Zn(2)-C6 fungal-type" evidence="2">
    <location>
        <begin position="140"/>
        <end position="166"/>
    </location>
</feature>
<feature type="region of interest" description="Disordered" evidence="3">
    <location>
        <begin position="1"/>
        <end position="39"/>
    </location>
</feature>
<feature type="region of interest" description="Disordered" evidence="3">
    <location>
        <begin position="53"/>
        <end position="116"/>
    </location>
</feature>
<feature type="region of interest" description="Disordered" evidence="3">
    <location>
        <begin position="179"/>
        <end position="223"/>
    </location>
</feature>
<feature type="region of interest" description="Disordered" evidence="3">
    <location>
        <begin position="238"/>
        <end position="293"/>
    </location>
</feature>
<feature type="region of interest" description="Disordered" evidence="3">
    <location>
        <begin position="588"/>
        <end position="629"/>
    </location>
</feature>
<feature type="compositionally biased region" description="Polar residues" evidence="3">
    <location>
        <begin position="18"/>
        <end position="32"/>
    </location>
</feature>
<feature type="compositionally biased region" description="Low complexity" evidence="3">
    <location>
        <begin position="53"/>
        <end position="69"/>
    </location>
</feature>
<feature type="compositionally biased region" description="Basic and acidic residues" evidence="3">
    <location>
        <begin position="71"/>
        <end position="82"/>
    </location>
</feature>
<feature type="compositionally biased region" description="Basic residues" evidence="3">
    <location>
        <begin position="83"/>
        <end position="93"/>
    </location>
</feature>
<feature type="compositionally biased region" description="Low complexity" evidence="3">
    <location>
        <begin position="94"/>
        <end position="103"/>
    </location>
</feature>
<feature type="compositionally biased region" description="Low complexity" evidence="3">
    <location>
        <begin position="184"/>
        <end position="193"/>
    </location>
</feature>
<feature type="compositionally biased region" description="Basic and acidic residues" evidence="3">
    <location>
        <begin position="214"/>
        <end position="223"/>
    </location>
</feature>
<protein>
    <recommendedName>
        <fullName>Xylanolytic transcriptional activator xlnR</fullName>
    </recommendedName>
    <alternativeName>
        <fullName>Xylanase regulator</fullName>
    </alternativeName>
</protein>
<reference key="1">
    <citation type="journal article" date="2008" name="PLoS Genet.">
        <title>Genomic islands in the pathogenic filamentous fungus Aspergillus fumigatus.</title>
        <authorList>
            <person name="Fedorova N.D."/>
            <person name="Khaldi N."/>
            <person name="Joardar V.S."/>
            <person name="Maiti R."/>
            <person name="Amedeo P."/>
            <person name="Anderson M.J."/>
            <person name="Crabtree J."/>
            <person name="Silva J.C."/>
            <person name="Badger J.H."/>
            <person name="Albarraq A."/>
            <person name="Angiuoli S."/>
            <person name="Bussey H."/>
            <person name="Bowyer P."/>
            <person name="Cotty P.J."/>
            <person name="Dyer P.S."/>
            <person name="Egan A."/>
            <person name="Galens K."/>
            <person name="Fraser-Liggett C.M."/>
            <person name="Haas B.J."/>
            <person name="Inman J.M."/>
            <person name="Kent R."/>
            <person name="Lemieux S."/>
            <person name="Malavazi I."/>
            <person name="Orvis J."/>
            <person name="Roemer T."/>
            <person name="Ronning C.M."/>
            <person name="Sundaram J.P."/>
            <person name="Sutton G."/>
            <person name="Turner G."/>
            <person name="Venter J.C."/>
            <person name="White O.R."/>
            <person name="Whitty B.R."/>
            <person name="Youngman P."/>
            <person name="Wolfe K.H."/>
            <person name="Goldman G.H."/>
            <person name="Wortman J.R."/>
            <person name="Jiang B."/>
            <person name="Denning D.W."/>
            <person name="Nierman W.C."/>
        </authorList>
    </citation>
    <scope>NUCLEOTIDE SEQUENCE [LARGE SCALE GENOMIC DNA]</scope>
    <source>
        <strain>ATCC 1007 / CBS 513.65 / DSM 816 / NCTC 3887 / NRRL 1 / QM 1276 / 107</strain>
    </source>
</reference>
<dbReference type="EMBL" id="DS027045">
    <property type="protein sequence ID" value="EAW14420.1"/>
    <property type="status" value="ALT_INIT"/>
    <property type="molecule type" value="Genomic_DNA"/>
</dbReference>
<dbReference type="RefSeq" id="XP_001275846.1">
    <property type="nucleotide sequence ID" value="XM_001275845.1"/>
</dbReference>
<dbReference type="SMR" id="A1C7P9"/>
<dbReference type="STRING" id="344612.A1C7P9"/>
<dbReference type="EnsemblFungi" id="EAW14420">
    <property type="protein sequence ID" value="EAW14420"/>
    <property type="gene ID" value="ACLA_074570"/>
</dbReference>
<dbReference type="GeneID" id="4707549"/>
<dbReference type="KEGG" id="act:ACLA_074570"/>
<dbReference type="eggNOG" id="ENOG502QUI0">
    <property type="taxonomic scope" value="Eukaryota"/>
</dbReference>
<dbReference type="OrthoDB" id="5365785at2759"/>
<dbReference type="Proteomes" id="UP000006701">
    <property type="component" value="Unassembled WGS sequence"/>
</dbReference>
<dbReference type="GO" id="GO:0005634">
    <property type="term" value="C:nucleus"/>
    <property type="evidence" value="ECO:0007669"/>
    <property type="project" value="UniProtKB-SubCell"/>
</dbReference>
<dbReference type="GO" id="GO:0003677">
    <property type="term" value="F:DNA binding"/>
    <property type="evidence" value="ECO:0007669"/>
    <property type="project" value="UniProtKB-KW"/>
</dbReference>
<dbReference type="GO" id="GO:0000981">
    <property type="term" value="F:DNA-binding transcription factor activity, RNA polymerase II-specific"/>
    <property type="evidence" value="ECO:0007669"/>
    <property type="project" value="InterPro"/>
</dbReference>
<dbReference type="GO" id="GO:0008270">
    <property type="term" value="F:zinc ion binding"/>
    <property type="evidence" value="ECO:0007669"/>
    <property type="project" value="InterPro"/>
</dbReference>
<dbReference type="GO" id="GO:0006351">
    <property type="term" value="P:DNA-templated transcription"/>
    <property type="evidence" value="ECO:0007669"/>
    <property type="project" value="InterPro"/>
</dbReference>
<dbReference type="GO" id="GO:0045893">
    <property type="term" value="P:positive regulation of DNA-templated transcription"/>
    <property type="evidence" value="ECO:0000250"/>
    <property type="project" value="UniProtKB"/>
</dbReference>
<dbReference type="GO" id="GO:0045493">
    <property type="term" value="P:xylan catabolic process"/>
    <property type="evidence" value="ECO:0000250"/>
    <property type="project" value="UniProtKB"/>
</dbReference>
<dbReference type="CDD" id="cd00067">
    <property type="entry name" value="GAL4"/>
    <property type="match status" value="1"/>
</dbReference>
<dbReference type="FunFam" id="4.10.240.10:FF:000004">
    <property type="entry name" value="Xylanolytic transcriptional activator XlnR"/>
    <property type="match status" value="1"/>
</dbReference>
<dbReference type="Gene3D" id="4.10.240.10">
    <property type="entry name" value="Zn(2)-C6 fungal-type DNA-binding domain"/>
    <property type="match status" value="1"/>
</dbReference>
<dbReference type="InterPro" id="IPR007219">
    <property type="entry name" value="Transcription_factor_dom_fun"/>
</dbReference>
<dbReference type="InterPro" id="IPR051439">
    <property type="entry name" value="XlnR/Xlr1"/>
</dbReference>
<dbReference type="InterPro" id="IPR036864">
    <property type="entry name" value="Zn2-C6_fun-type_DNA-bd_sf"/>
</dbReference>
<dbReference type="InterPro" id="IPR001138">
    <property type="entry name" value="Zn2Cys6_DnaBD"/>
</dbReference>
<dbReference type="PANTHER" id="PTHR47663">
    <property type="entry name" value="XYLANOLYTIC TRANSCRIPTIONAL ACTIVATOR XLNR-RELATED"/>
    <property type="match status" value="1"/>
</dbReference>
<dbReference type="PANTHER" id="PTHR47663:SF1">
    <property type="entry name" value="XYLANOLYTIC TRANSCRIPTIONAL ACTIVATOR XLNR-RELATED"/>
    <property type="match status" value="1"/>
</dbReference>
<dbReference type="Pfam" id="PF04082">
    <property type="entry name" value="Fungal_trans"/>
    <property type="match status" value="1"/>
</dbReference>
<dbReference type="Pfam" id="PF00172">
    <property type="entry name" value="Zn_clus"/>
    <property type="match status" value="1"/>
</dbReference>
<dbReference type="SMART" id="SM00906">
    <property type="entry name" value="Fungal_trans"/>
    <property type="match status" value="1"/>
</dbReference>
<dbReference type="SMART" id="SM00066">
    <property type="entry name" value="GAL4"/>
    <property type="match status" value="1"/>
</dbReference>
<dbReference type="SUPFAM" id="SSF57701">
    <property type="entry name" value="Zn2/Cys6 DNA-binding domain"/>
    <property type="match status" value="1"/>
</dbReference>
<dbReference type="PROSITE" id="PS50048">
    <property type="entry name" value="ZN2_CY6_FUNGAL_2"/>
    <property type="match status" value="1"/>
</dbReference>
<comment type="function">
    <text evidence="1">Transcriptional activator of the xylanolytic system. Involved in the regulation of extracellular cellulolytic and xylanolytic genes and in the regulation of the intracellular activities of D-xylose catabolic genes in the pentose catabolic pathway (PCP) in response to the presence of D-xylose (By similarity).</text>
</comment>
<comment type="subcellular location">
    <subcellularLocation>
        <location evidence="2">Nucleus</location>
    </subcellularLocation>
</comment>
<comment type="similarity">
    <text evidence="4">Belongs to the xlnR/xlr1 family.</text>
</comment>
<comment type="sequence caution" evidence="4">
    <conflict type="erroneous initiation">
        <sequence resource="EMBL-CDS" id="EAW14420"/>
    </conflict>
</comment>
<organism>
    <name type="scientific">Aspergillus clavatus (strain ATCC 1007 / CBS 513.65 / DSM 816 / NCTC 3887 / NRRL 1 / QM 1276 / 107)</name>
    <dbReference type="NCBI Taxonomy" id="344612"/>
    <lineage>
        <taxon>Eukaryota</taxon>
        <taxon>Fungi</taxon>
        <taxon>Dikarya</taxon>
        <taxon>Ascomycota</taxon>
        <taxon>Pezizomycotina</taxon>
        <taxon>Eurotiomycetes</taxon>
        <taxon>Eurotiomycetidae</taxon>
        <taxon>Eurotiales</taxon>
        <taxon>Aspergillaceae</taxon>
        <taxon>Aspergillus</taxon>
        <taxon>Aspergillus subgen. Fumigati</taxon>
    </lineage>
</organism>
<accession>A1C7P9</accession>